<sequence>ADDKNPLEECFREADYEEFLEIAKVTVLEASERNDKEDWYANLGPMRLPEKLNEFVQETENGWYFIKYPVKPSEEGKSAGQLYEESLRKSAGQLYQESLGKAHDDIFAYEKRFDEIVDGMDKLPTSMYQAIQERINFKPPLPPKKYAMGAITTFTPYQFQHFSEALTAPVGR</sequence>
<proteinExistence type="evidence at protein level"/>
<comment type="function">
    <text evidence="1 3">Catalyzes an oxidative deamination of predominantly hydrophobic and aromatic L-amino acids, thus producing hydrogen peroxide that may contribute to the diverse toxic effects of this enzyme (PubMed:30647580). Shows high specificity for L-Arg, L-Met, L-Phe, L-Leu, L-Tyr, L-Ile and L-Trp, low specificity for L-Val, L-Ala, L-Asn, L-Gln, and no specificity for L-Pro, L-Ser, L-Thr, L-Cys, L-Gly and L-Asp (PubMed:30647580). Exhibits diverse biological activities, such as hemorrhage, hemolysis, edema, antibacterial and antiparasitic activities, as well as regulation of platelet aggregation. Its effect on platelets is controversial, since it either induces aggregation or inhibits agonist-induced aggregation. These different effects are probably due to different experimental conditions.</text>
</comment>
<comment type="catalytic activity">
    <reaction evidence="3">
        <text>an L-alpha-amino acid + O2 + H2O = a 2-oxocarboxylate + H2O2 + NH4(+)</text>
        <dbReference type="Rhea" id="RHEA:13781"/>
        <dbReference type="ChEBI" id="CHEBI:15377"/>
        <dbReference type="ChEBI" id="CHEBI:15379"/>
        <dbReference type="ChEBI" id="CHEBI:16240"/>
        <dbReference type="ChEBI" id="CHEBI:28938"/>
        <dbReference type="ChEBI" id="CHEBI:35179"/>
        <dbReference type="ChEBI" id="CHEBI:59869"/>
        <dbReference type="EC" id="1.4.3.2"/>
    </reaction>
</comment>
<comment type="catalytic activity">
    <reaction evidence="3">
        <text>L-leucine + O2 + H2O = 4-methyl-2-oxopentanoate + H2O2 + NH4(+)</text>
        <dbReference type="Rhea" id="RHEA:60996"/>
        <dbReference type="ChEBI" id="CHEBI:15377"/>
        <dbReference type="ChEBI" id="CHEBI:15379"/>
        <dbReference type="ChEBI" id="CHEBI:16240"/>
        <dbReference type="ChEBI" id="CHEBI:17865"/>
        <dbReference type="ChEBI" id="CHEBI:28938"/>
        <dbReference type="ChEBI" id="CHEBI:57427"/>
    </reaction>
</comment>
<comment type="catalytic activity">
    <reaction evidence="3">
        <text>L-phenylalanine + O2 + H2O = 3-phenylpyruvate + H2O2 + NH4(+)</text>
        <dbReference type="Rhea" id="RHEA:61240"/>
        <dbReference type="ChEBI" id="CHEBI:15377"/>
        <dbReference type="ChEBI" id="CHEBI:15379"/>
        <dbReference type="ChEBI" id="CHEBI:16240"/>
        <dbReference type="ChEBI" id="CHEBI:18005"/>
        <dbReference type="ChEBI" id="CHEBI:28938"/>
        <dbReference type="ChEBI" id="CHEBI:58095"/>
    </reaction>
</comment>
<comment type="catalytic activity">
    <reaction evidence="3">
        <text>L-tryptophan + O2 + H2O = indole-3-pyruvate + H2O2 + NH4(+)</text>
        <dbReference type="Rhea" id="RHEA:61244"/>
        <dbReference type="ChEBI" id="CHEBI:15377"/>
        <dbReference type="ChEBI" id="CHEBI:15379"/>
        <dbReference type="ChEBI" id="CHEBI:16240"/>
        <dbReference type="ChEBI" id="CHEBI:17640"/>
        <dbReference type="ChEBI" id="CHEBI:28938"/>
        <dbReference type="ChEBI" id="CHEBI:57912"/>
    </reaction>
</comment>
<comment type="catalytic activity">
    <reaction evidence="3">
        <text>L-methionine + O2 + H2O = 4-methylsulfanyl-2-oxobutanoate + H2O2 + NH4(+)</text>
        <dbReference type="Rhea" id="RHEA:61236"/>
        <dbReference type="ChEBI" id="CHEBI:15377"/>
        <dbReference type="ChEBI" id="CHEBI:15379"/>
        <dbReference type="ChEBI" id="CHEBI:16240"/>
        <dbReference type="ChEBI" id="CHEBI:16723"/>
        <dbReference type="ChEBI" id="CHEBI:28938"/>
        <dbReference type="ChEBI" id="CHEBI:57844"/>
    </reaction>
</comment>
<comment type="catalytic activity">
    <reaction evidence="3">
        <text>L-isoleucine + O2 + H2O = (S)-3-methyl-2-oxopentanoate + H2O2 + NH4(+)</text>
        <dbReference type="Rhea" id="RHEA:61232"/>
        <dbReference type="ChEBI" id="CHEBI:15377"/>
        <dbReference type="ChEBI" id="CHEBI:15379"/>
        <dbReference type="ChEBI" id="CHEBI:16240"/>
        <dbReference type="ChEBI" id="CHEBI:28938"/>
        <dbReference type="ChEBI" id="CHEBI:35146"/>
        <dbReference type="ChEBI" id="CHEBI:58045"/>
    </reaction>
</comment>
<comment type="catalytic activity">
    <reaction evidence="3">
        <text>L-arginine + O2 + H2O = 5-guanidino-2-oxopentanoate + H2O2 + NH4(+)</text>
        <dbReference type="Rhea" id="RHEA:51404"/>
        <dbReference type="ChEBI" id="CHEBI:15377"/>
        <dbReference type="ChEBI" id="CHEBI:15379"/>
        <dbReference type="ChEBI" id="CHEBI:16240"/>
        <dbReference type="ChEBI" id="CHEBI:28938"/>
        <dbReference type="ChEBI" id="CHEBI:32682"/>
        <dbReference type="ChEBI" id="CHEBI:58489"/>
    </reaction>
</comment>
<comment type="catalytic activity">
    <reaction evidence="3">
        <text>L-tyrosine + O2 + H2O = 3-(4-hydroxyphenyl)pyruvate + H2O2 + NH4(+)</text>
        <dbReference type="Rhea" id="RHEA:61248"/>
        <dbReference type="ChEBI" id="CHEBI:15377"/>
        <dbReference type="ChEBI" id="CHEBI:15379"/>
        <dbReference type="ChEBI" id="CHEBI:16240"/>
        <dbReference type="ChEBI" id="CHEBI:28938"/>
        <dbReference type="ChEBI" id="CHEBI:36242"/>
        <dbReference type="ChEBI" id="CHEBI:58315"/>
    </reaction>
</comment>
<comment type="cofactor">
    <cofactor evidence="2">
        <name>FAD</name>
        <dbReference type="ChEBI" id="CHEBI:57692"/>
    </cofactor>
</comment>
<comment type="activity regulation">
    <text evidence="3">Activity is increased by Mn(2+) ions. Inhibited by Zn(2+), Ni(2+), Co(2+), Cu(2+) and Al(3+). No significant activity change by Na(+), K(+), Ca(2+), Mg(2+) and Ba(2+) ions. Both isoform are completely inhibited by L-Cys and reduced glutathione. O-phenanthroline, beta-mercaptoethanol and PMSF completely inhibit the enzymatic activity of LAAOII, but have no activity on LAAOI. Iodoacetic acid inhibits the enzymatic activity of LAAOII by 46% but has no effect on the LAAOI activity.</text>
</comment>
<comment type="biophysicochemical properties">
    <kinetics>
        <KM evidence="3">0.67 mM for L-Leu (Cc-LAAOI isoform)</KM>
        <KM evidence="3">0.82 mM for L-Leu (Cc-LAAOII isoform)</KM>
    </kinetics>
    <phDependence>
        <text evidence="3">Optimum pH is 7.8 (Cc-LAAOI) and 7 (Cc-LAAOII).</text>
    </phDependence>
    <temperatureDependence>
        <text evidence="3">Optimum temperature is 50 (Cc-LAAOI) and 60 (Cc-LAAOII) degrees Celsius.</text>
    </temperatureDependence>
</comment>
<comment type="subunit">
    <text evidence="6">Heterodimer; non-covalently linked.</text>
</comment>
<comment type="subcellular location">
    <subcellularLocation>
        <location evidence="3">Secreted</location>
    </subcellularLocation>
</comment>
<comment type="tissue specificity">
    <text evidence="6">Expressed by the venom gland.</text>
</comment>
<comment type="PTM">
    <text evidence="2">N-glycosylated.</text>
</comment>
<comment type="similarity">
    <text evidence="5">Belongs to the flavin monoamine oxidase family. FIG1 subfamily.</text>
</comment>
<comment type="caution">
    <text evidence="3">Two L-amino-acid oxidase isoforms from C.cerastes venom have been described: Cc-LAAOI and Cc-LAAOII. Both isoforms show very similar activities on different substrates tested, as well as for activity regulation by metal ions. It is unknown which isoform is presented here.</text>
</comment>
<accession>P0DQH9</accession>
<keyword id="KW-0044">Antibiotic</keyword>
<keyword id="KW-0929">Antimicrobial</keyword>
<keyword id="KW-0204">Cytolysis</keyword>
<keyword id="KW-0903">Direct protein sequencing</keyword>
<keyword id="KW-1015">Disulfide bond</keyword>
<keyword id="KW-0274">FAD</keyword>
<keyword id="KW-0285">Flavoprotein</keyword>
<keyword id="KW-0325">Glycoprotein</keyword>
<keyword id="KW-0354">Hemolysis</keyword>
<keyword id="KW-1199">Hemostasis impairing toxin</keyword>
<keyword id="KW-0560">Oxidoreductase</keyword>
<keyword id="KW-1201">Platelet aggregation inhibiting toxin</keyword>
<keyword id="KW-0964">Secreted</keyword>
<keyword id="KW-0800">Toxin</keyword>
<organism>
    <name type="scientific">Cerastes cerastes</name>
    <name type="common">Horned desert viper</name>
    <dbReference type="NCBI Taxonomy" id="8697"/>
    <lineage>
        <taxon>Eukaryota</taxon>
        <taxon>Metazoa</taxon>
        <taxon>Chordata</taxon>
        <taxon>Craniata</taxon>
        <taxon>Vertebrata</taxon>
        <taxon>Euteleostomi</taxon>
        <taxon>Lepidosauria</taxon>
        <taxon>Squamata</taxon>
        <taxon>Bifurcata</taxon>
        <taxon>Unidentata</taxon>
        <taxon>Episquamata</taxon>
        <taxon>Toxicofera</taxon>
        <taxon>Serpentes</taxon>
        <taxon>Colubroidea</taxon>
        <taxon>Viperidae</taxon>
        <taxon>Viperinae</taxon>
        <taxon>Cerastes</taxon>
    </lineage>
</organism>
<dbReference type="EC" id="1.4.3.2" evidence="3"/>
<dbReference type="SMR" id="P0DQH9"/>
<dbReference type="SABIO-RK" id="P0DQH9"/>
<dbReference type="GO" id="GO:0005576">
    <property type="term" value="C:extracellular region"/>
    <property type="evidence" value="ECO:0007669"/>
    <property type="project" value="UniProtKB-SubCell"/>
</dbReference>
<dbReference type="GO" id="GO:0106329">
    <property type="term" value="F:L-phenylalaine oxidase activity"/>
    <property type="evidence" value="ECO:0007669"/>
    <property type="project" value="RHEA"/>
</dbReference>
<dbReference type="GO" id="GO:0090729">
    <property type="term" value="F:toxin activity"/>
    <property type="evidence" value="ECO:0007669"/>
    <property type="project" value="UniProtKB-KW"/>
</dbReference>
<dbReference type="GO" id="GO:0042742">
    <property type="term" value="P:defense response to bacterium"/>
    <property type="evidence" value="ECO:0007669"/>
    <property type="project" value="UniProtKB-KW"/>
</dbReference>
<dbReference type="GO" id="GO:0031640">
    <property type="term" value="P:killing of cells of another organism"/>
    <property type="evidence" value="ECO:0007669"/>
    <property type="project" value="UniProtKB-KW"/>
</dbReference>
<dbReference type="Gene3D" id="3.90.660.10">
    <property type="match status" value="1"/>
</dbReference>
<dbReference type="Gene3D" id="3.50.50.60">
    <property type="entry name" value="FAD/NAD(P)-binding domain"/>
    <property type="match status" value="1"/>
</dbReference>
<dbReference type="Gene3D" id="1.10.405.10">
    <property type="entry name" value="Guanine Nucleotide Dissociation Inhibitor, domain 1"/>
    <property type="match status" value="1"/>
</dbReference>
<dbReference type="InterPro" id="IPR036188">
    <property type="entry name" value="FAD/NAD-bd_sf"/>
</dbReference>
<reference key="1">
    <citation type="journal article" date="2015" name="J. Genet. Eng. Biotechnol.">
        <title>Heterodimeric l-amino acid oxidase enzymes from Egyptian Cerastes cerastes venom: Purification, biochemical characterization and partial amino acid sequencing.</title>
        <authorList>
            <person name="El Hakim A.E."/>
            <person name="Salama W.H."/>
            <person name="Hamed M.B."/>
            <person name="Ali A.A."/>
            <person name="Ibrahim N.M."/>
        </authorList>
    </citation>
    <scope>PROTEIN SEQUENCE</scope>
    <scope>FUNCTION</scope>
    <scope>CATALYTIC ACTIVITY</scope>
    <scope>ACTIVITY REGULATION</scope>
    <scope>BIOPHYSICOCHEMICAL PROPERTIES</scope>
    <scope>SUBCELLULAR LOCATION</scope>
    <scope>SUBSTRATE SPECIFICITY</scope>
    <source>
        <tissue>Venom</tissue>
    </source>
</reference>
<feature type="chain" id="PRO_0000448257" description="L-amino acid oxidase">
    <location>
        <begin position="1"/>
        <end position="172" status="greater than"/>
    </location>
</feature>
<feature type="binding site" evidence="2">
    <location>
        <begin position="44"/>
        <end position="47"/>
    </location>
    <ligand>
        <name>FAD</name>
        <dbReference type="ChEBI" id="CHEBI:57692"/>
    </ligand>
</feature>
<feature type="binding site" evidence="2">
    <location>
        <position position="47"/>
    </location>
    <ligand>
        <name>substrate</name>
    </ligand>
</feature>
<feature type="binding site" evidence="2">
    <location>
        <position position="103"/>
    </location>
    <ligand>
        <name>substrate</name>
    </ligand>
</feature>
<feature type="disulfide bond" evidence="2">
    <location>
        <begin position="10"/>
        <end status="unknown"/>
    </location>
</feature>
<feature type="non-consecutive residues" evidence="4">
    <location>
        <begin position="24"/>
        <end position="25"/>
    </location>
</feature>
<feature type="non-consecutive residues" evidence="4">
    <location>
        <begin position="33"/>
        <end position="34"/>
    </location>
</feature>
<feature type="non-consecutive residues" evidence="4">
    <location>
        <begin position="51"/>
        <end position="52"/>
    </location>
</feature>
<feature type="non-consecutive residues" evidence="4">
    <location>
        <begin position="67"/>
        <end position="68"/>
    </location>
</feature>
<feature type="non-consecutive residues" evidence="4">
    <location>
        <begin position="89"/>
        <end position="90"/>
    </location>
</feature>
<feature type="non-consecutive residues" evidence="4">
    <location>
        <begin position="102"/>
        <end position="103"/>
    </location>
</feature>
<feature type="non-consecutive residues" evidence="4">
    <location>
        <begin position="133"/>
        <end position="134"/>
    </location>
</feature>
<feature type="non-consecutive residues" evidence="4">
    <location>
        <begin position="145"/>
        <end position="146"/>
    </location>
</feature>
<feature type="non-terminal residue" evidence="4">
    <location>
        <position position="172"/>
    </location>
</feature>
<name>OXLAB_CERCE</name>
<evidence type="ECO:0000250" key="1"/>
<evidence type="ECO:0000250" key="2">
    <source>
        <dbReference type="UniProtKB" id="P81382"/>
    </source>
</evidence>
<evidence type="ECO:0000269" key="3">
    <source>
    </source>
</evidence>
<evidence type="ECO:0000303" key="4">
    <source>
    </source>
</evidence>
<evidence type="ECO:0000305" key="5"/>
<evidence type="ECO:0000305" key="6">
    <source>
    </source>
</evidence>
<protein>
    <recommendedName>
        <fullName evidence="4">L-amino acid oxidase</fullName>
    </recommendedName>
    <alternativeName>
        <fullName evidence="4">CC-LAAO</fullName>
        <shortName>LAO</shortName>
        <ecNumber evidence="3">1.4.3.2</ecNumber>
    </alternativeName>
</protein>